<proteinExistence type="evidence at protein level"/>
<protein>
    <recommendedName>
        <fullName>Cyclin-dependent kinases regulatory subunit 1</fullName>
    </recommendedName>
    <alternativeName>
        <fullName>CKS1-At</fullName>
    </alternativeName>
</protein>
<name>CKS1_ARATH</name>
<sequence length="87" mass="10521">MGQIQYSEKYFDDTFEYRHVVLPPEVAKLLPKNRLLSENEWRAIGVQQSRGWVHYAVHRPEPHIMLFRRPLNYQQQQENQAQNMLVK</sequence>
<accession>O23249</accession>
<dbReference type="EMBL" id="AJ000016">
    <property type="protein sequence ID" value="CAA03859.1"/>
    <property type="molecule type" value="mRNA"/>
</dbReference>
<dbReference type="EMBL" id="AC006929">
    <property type="protein sequence ID" value="AAD21506.1"/>
    <property type="molecule type" value="Genomic_DNA"/>
</dbReference>
<dbReference type="EMBL" id="CP002685">
    <property type="protein sequence ID" value="AEC08064.1"/>
    <property type="molecule type" value="Genomic_DNA"/>
</dbReference>
<dbReference type="EMBL" id="AK175719">
    <property type="protein sequence ID" value="BAD43482.1"/>
    <property type="molecule type" value="mRNA"/>
</dbReference>
<dbReference type="EMBL" id="AK175828">
    <property type="protein sequence ID" value="BAD43591.1"/>
    <property type="molecule type" value="mRNA"/>
</dbReference>
<dbReference type="EMBL" id="AK176119">
    <property type="protein sequence ID" value="BAD43882.1"/>
    <property type="molecule type" value="mRNA"/>
</dbReference>
<dbReference type="EMBL" id="BT024528">
    <property type="protein sequence ID" value="ABD38867.1"/>
    <property type="molecule type" value="mRNA"/>
</dbReference>
<dbReference type="EMBL" id="AY088339">
    <property type="protein sequence ID" value="AAM65878.1"/>
    <property type="molecule type" value="mRNA"/>
</dbReference>
<dbReference type="PIR" id="A84679">
    <property type="entry name" value="A84679"/>
</dbReference>
<dbReference type="RefSeq" id="NP_180363.1">
    <property type="nucleotide sequence ID" value="NM_128355.3"/>
</dbReference>
<dbReference type="SMR" id="O23249"/>
<dbReference type="BioGRID" id="2690">
    <property type="interactions" value="51"/>
</dbReference>
<dbReference type="FunCoup" id="O23249">
    <property type="interactions" value="2458"/>
</dbReference>
<dbReference type="IntAct" id="O23249">
    <property type="interactions" value="40"/>
</dbReference>
<dbReference type="STRING" id="3702.O23249"/>
<dbReference type="MetOSite" id="O23249"/>
<dbReference type="PaxDb" id="3702-AT2G27960.1"/>
<dbReference type="ProteomicsDB" id="222611"/>
<dbReference type="DNASU" id="817340"/>
<dbReference type="EnsemblPlants" id="AT2G27960.1">
    <property type="protein sequence ID" value="AT2G27960.1"/>
    <property type="gene ID" value="AT2G27960"/>
</dbReference>
<dbReference type="GeneID" id="817340"/>
<dbReference type="Gramene" id="AT2G27960.1">
    <property type="protein sequence ID" value="AT2G27960.1"/>
    <property type="gene ID" value="AT2G27960"/>
</dbReference>
<dbReference type="KEGG" id="ath:AT2G27960"/>
<dbReference type="Araport" id="AT2G27960"/>
<dbReference type="TAIR" id="AT2G27960">
    <property type="gene designation" value="CKS1"/>
</dbReference>
<dbReference type="eggNOG" id="KOG3484">
    <property type="taxonomic scope" value="Eukaryota"/>
</dbReference>
<dbReference type="HOGENOM" id="CLU_140546_2_0_1"/>
<dbReference type="InParanoid" id="O23249"/>
<dbReference type="OMA" id="MSENEWR"/>
<dbReference type="OrthoDB" id="440676at2759"/>
<dbReference type="PhylomeDB" id="O23249"/>
<dbReference type="PRO" id="PR:O23249"/>
<dbReference type="Proteomes" id="UP000006548">
    <property type="component" value="Chromosome 2"/>
</dbReference>
<dbReference type="ExpressionAtlas" id="O23249">
    <property type="expression patterns" value="baseline and differential"/>
</dbReference>
<dbReference type="GO" id="GO:0005737">
    <property type="term" value="C:cytoplasm"/>
    <property type="evidence" value="ECO:0000314"/>
    <property type="project" value="TAIR"/>
</dbReference>
<dbReference type="GO" id="GO:0005777">
    <property type="term" value="C:peroxisome"/>
    <property type="evidence" value="ECO:0007005"/>
    <property type="project" value="TAIR"/>
</dbReference>
<dbReference type="GO" id="GO:0016538">
    <property type="term" value="F:cyclin-dependent protein serine/threonine kinase regulator activity"/>
    <property type="evidence" value="ECO:0007669"/>
    <property type="project" value="InterPro"/>
</dbReference>
<dbReference type="GO" id="GO:0051301">
    <property type="term" value="P:cell division"/>
    <property type="evidence" value="ECO:0007669"/>
    <property type="project" value="UniProtKB-KW"/>
</dbReference>
<dbReference type="GO" id="GO:0042023">
    <property type="term" value="P:DNA endoreduplication"/>
    <property type="evidence" value="ECO:0000314"/>
    <property type="project" value="TAIR"/>
</dbReference>
<dbReference type="GO" id="GO:0000278">
    <property type="term" value="P:mitotic cell cycle"/>
    <property type="evidence" value="ECO:0000314"/>
    <property type="project" value="TAIR"/>
</dbReference>
<dbReference type="GO" id="GO:0051726">
    <property type="term" value="P:regulation of cell cycle"/>
    <property type="evidence" value="ECO:0000315"/>
    <property type="project" value="TAIR"/>
</dbReference>
<dbReference type="FunFam" id="3.30.170.10:FF:000003">
    <property type="entry name" value="Cyclin-dependent kinases regulatory subunit"/>
    <property type="match status" value="1"/>
</dbReference>
<dbReference type="Gene3D" id="3.30.170.10">
    <property type="entry name" value="Cyclin-dependent kinase, regulatory subunit"/>
    <property type="match status" value="1"/>
</dbReference>
<dbReference type="InterPro" id="IPR000789">
    <property type="entry name" value="Cyclin-dep_kinase_reg-sub"/>
</dbReference>
<dbReference type="InterPro" id="IPR036858">
    <property type="entry name" value="Cyclin-dep_kinase_reg-sub_sf"/>
</dbReference>
<dbReference type="PANTHER" id="PTHR23415">
    <property type="entry name" value="CYCLIN-DEPENDENT KINASES REGULATORY SUBUNIT/60S RIBOSOME SUBUNIT BIOGENESIS PROTEIN NIP7"/>
    <property type="match status" value="1"/>
</dbReference>
<dbReference type="Pfam" id="PF01111">
    <property type="entry name" value="CKS"/>
    <property type="match status" value="1"/>
</dbReference>
<dbReference type="PRINTS" id="PR00296">
    <property type="entry name" value="CYCLINKINASE"/>
</dbReference>
<dbReference type="SMART" id="SM01084">
    <property type="entry name" value="CKS"/>
    <property type="match status" value="1"/>
</dbReference>
<dbReference type="SUPFAM" id="SSF55637">
    <property type="entry name" value="Cell cycle regulatory proteins"/>
    <property type="match status" value="1"/>
</dbReference>
<dbReference type="PROSITE" id="PS00944">
    <property type="entry name" value="CKS_1"/>
    <property type="match status" value="1"/>
</dbReference>
<gene>
    <name type="primary">CKS1</name>
    <name type="ordered locus">At2g27960</name>
    <name type="ORF">T1E2.12</name>
</gene>
<reference key="1">
    <citation type="journal article" date="1997" name="FEBS Lett.">
        <title>The Arabidopsis Cks1At protein binds the cyclin-dependent kinases Cdc2aAt and Cdc2bAt.</title>
        <authorList>
            <person name="de Veylder L."/>
            <person name="Segers G."/>
            <person name="Glab N."/>
            <person name="Casteels P."/>
            <person name="van Montagu M."/>
            <person name="Inze D."/>
        </authorList>
    </citation>
    <scope>NUCLEOTIDE SEQUENCE [MRNA]</scope>
    <scope>INTERACTION WITH CDKA-1 AND CDKB1-1</scope>
</reference>
<reference key="2">
    <citation type="journal article" date="1999" name="Nature">
        <title>Sequence and analysis of chromosome 2 of the plant Arabidopsis thaliana.</title>
        <authorList>
            <person name="Lin X."/>
            <person name="Kaul S."/>
            <person name="Rounsley S.D."/>
            <person name="Shea T.P."/>
            <person name="Benito M.-I."/>
            <person name="Town C.D."/>
            <person name="Fujii C.Y."/>
            <person name="Mason T.M."/>
            <person name="Bowman C.L."/>
            <person name="Barnstead M.E."/>
            <person name="Feldblyum T.V."/>
            <person name="Buell C.R."/>
            <person name="Ketchum K.A."/>
            <person name="Lee J.J."/>
            <person name="Ronning C.M."/>
            <person name="Koo H.L."/>
            <person name="Moffat K.S."/>
            <person name="Cronin L.A."/>
            <person name="Shen M."/>
            <person name="Pai G."/>
            <person name="Van Aken S."/>
            <person name="Umayam L."/>
            <person name="Tallon L.J."/>
            <person name="Gill J.E."/>
            <person name="Adams M.D."/>
            <person name="Carrera A.J."/>
            <person name="Creasy T.H."/>
            <person name="Goodman H.M."/>
            <person name="Somerville C.R."/>
            <person name="Copenhaver G.P."/>
            <person name="Preuss D."/>
            <person name="Nierman W.C."/>
            <person name="White O."/>
            <person name="Eisen J.A."/>
            <person name="Salzberg S.L."/>
            <person name="Fraser C.M."/>
            <person name="Venter J.C."/>
        </authorList>
    </citation>
    <scope>NUCLEOTIDE SEQUENCE [LARGE SCALE GENOMIC DNA]</scope>
    <source>
        <strain>cv. Columbia</strain>
    </source>
</reference>
<reference key="3">
    <citation type="journal article" date="2017" name="Plant J.">
        <title>Araport11: a complete reannotation of the Arabidopsis thaliana reference genome.</title>
        <authorList>
            <person name="Cheng C.Y."/>
            <person name="Krishnakumar V."/>
            <person name="Chan A.P."/>
            <person name="Thibaud-Nissen F."/>
            <person name="Schobel S."/>
            <person name="Town C.D."/>
        </authorList>
    </citation>
    <scope>GENOME REANNOTATION</scope>
    <source>
        <strain>cv. Columbia</strain>
    </source>
</reference>
<reference key="4">
    <citation type="submission" date="2004-09" db="EMBL/GenBank/DDBJ databases">
        <title>Large-scale analysis of RIKEN Arabidopsis full-length (RAFL) cDNAs.</title>
        <authorList>
            <person name="Totoki Y."/>
            <person name="Seki M."/>
            <person name="Ishida J."/>
            <person name="Nakajima M."/>
            <person name="Enju A."/>
            <person name="Kamiya A."/>
            <person name="Narusaka M."/>
            <person name="Shin-i T."/>
            <person name="Nakagawa M."/>
            <person name="Sakamoto N."/>
            <person name="Oishi K."/>
            <person name="Kohara Y."/>
            <person name="Kobayashi M."/>
            <person name="Toyoda A."/>
            <person name="Sakaki Y."/>
            <person name="Sakurai T."/>
            <person name="Iida K."/>
            <person name="Akiyama K."/>
            <person name="Satou M."/>
            <person name="Toyoda T."/>
            <person name="Konagaya A."/>
            <person name="Carninci P."/>
            <person name="Kawai J."/>
            <person name="Hayashizaki Y."/>
            <person name="Shinozaki K."/>
        </authorList>
    </citation>
    <scope>NUCLEOTIDE SEQUENCE [LARGE SCALE MRNA]</scope>
    <source>
        <strain>cv. Columbia</strain>
    </source>
</reference>
<reference key="5">
    <citation type="submission" date="2006-02" db="EMBL/GenBank/DDBJ databases">
        <title>Arabidopsis ORF clones.</title>
        <authorList>
            <person name="Shinn P."/>
            <person name="Chen H."/>
            <person name="Kim C.J."/>
            <person name="Ecker J.R."/>
        </authorList>
    </citation>
    <scope>NUCLEOTIDE SEQUENCE [LARGE SCALE MRNA]</scope>
    <source>
        <strain>cv. Columbia</strain>
    </source>
</reference>
<reference key="6">
    <citation type="submission" date="2002-03" db="EMBL/GenBank/DDBJ databases">
        <title>Full-length cDNA from Arabidopsis thaliana.</title>
        <authorList>
            <person name="Brover V.V."/>
            <person name="Troukhan M.E."/>
            <person name="Alexandrov N.A."/>
            <person name="Lu Y.-P."/>
            <person name="Flavell R.B."/>
            <person name="Feldmann K.A."/>
        </authorList>
    </citation>
    <scope>NUCLEOTIDE SEQUENCE [LARGE SCALE MRNA]</scope>
</reference>
<reference key="7">
    <citation type="journal article" date="1999" name="FEBS Lett.">
        <title>Mutational analysis of two Arabidopsis thaliana cyclin-dependent kinases in fission yeast.</title>
        <authorList>
            <person name="Porceddu A."/>
            <person name="de Veylder L."/>
            <person name="Hayles J."/>
            <person name="van Montagu M."/>
            <person name="Inze D."/>
            <person name="Mironov V."/>
        </authorList>
    </citation>
    <scope>INTERACTION WITH CDKA-1</scope>
</reference>
<reference key="8">
    <citation type="journal article" date="2001" name="J. Exp. Bot.">
        <title>Identification of novel cyclin-dependent kinases interacting with the CKS1 protein of Arabidopsis.</title>
        <authorList>
            <person name="Boudolf V."/>
            <person name="Rombauts S."/>
            <person name="Naudts M."/>
            <person name="Inze D."/>
            <person name="de Veylder L."/>
        </authorList>
    </citation>
    <scope>INTERACTION WITH CDKB1-2 AND CDKB2-1</scope>
</reference>
<reference key="9">
    <citation type="journal article" date="2001" name="Plant J.">
        <title>CKS1At overexpression in Arabidopsis thaliana inhibits growth by reducing meristem size and inhibiting cell-cycle progression.</title>
        <authorList>
            <person name="de Veylder L."/>
            <person name="Beemster G.T.S."/>
            <person name="Beeckman T."/>
            <person name="Inze D."/>
        </authorList>
    </citation>
    <scope>FUNCTION</scope>
    <scope>INTERACTION WITH CDKA-1 AND CDKB1-1</scope>
    <scope>MUTAGENESIS OF GLU-61</scope>
</reference>
<reference key="10">
    <citation type="journal article" date="2002" name="Plant Cell">
        <title>Genome-wide analysis of core cell cycle genes in Arabidopsis.</title>
        <authorList>
            <person name="Vandepoele K."/>
            <person name="Raes J."/>
            <person name="de Veylder L."/>
            <person name="Rouze P."/>
            <person name="Rombauts S."/>
            <person name="Inze D."/>
        </authorList>
    </citation>
    <scope>GENE FAMILY</scope>
    <scope>NOMENCLATURE</scope>
</reference>
<reference key="11">
    <citation type="journal article" date="2010" name="Mol. Syst. Biol.">
        <title>Targeted interactomics reveals a complex core cell cycle machinery in Arabidopsis thaliana.</title>
        <authorList>
            <person name="Van Leene J."/>
            <person name="Hollunder J."/>
            <person name="Eeckhout D."/>
            <person name="Persiau G."/>
            <person name="Van De Slijke E."/>
            <person name="Stals H."/>
            <person name="Van Isterdael G."/>
            <person name="Verkest A."/>
            <person name="Neirynck S."/>
            <person name="Buffel Y."/>
            <person name="De Bodt S."/>
            <person name="Maere S."/>
            <person name="Laukens K."/>
            <person name="Pharazyn A."/>
            <person name="Ferreira P.C.G."/>
            <person name="Eloy N."/>
            <person name="Renne C."/>
            <person name="Meyer C."/>
            <person name="Faure J.-D."/>
            <person name="Steinbrenner J."/>
            <person name="Beynon J."/>
            <person name="Larkin J.C."/>
            <person name="Van de Peer Y."/>
            <person name="Hilson P."/>
            <person name="Kuiper M."/>
            <person name="De Veylder L."/>
            <person name="Van Onckelen H."/>
            <person name="Inze D."/>
            <person name="Witters E."/>
            <person name="De Jaeger G."/>
        </authorList>
    </citation>
    <scope>INTERACTION WITH CDKA-1; CYCD2-1 AND AT4G14310</scope>
</reference>
<keyword id="KW-0131">Cell cycle</keyword>
<keyword id="KW-0132">Cell division</keyword>
<keyword id="KW-1185">Reference proteome</keyword>
<evidence type="ECO:0000269" key="1">
    <source>
    </source>
</evidence>
<evidence type="ECO:0000269" key="2">
    <source>
    </source>
</evidence>
<evidence type="ECO:0000269" key="3">
    <source>
    </source>
</evidence>
<evidence type="ECO:0000269" key="4">
    <source>
    </source>
</evidence>
<evidence type="ECO:0000269" key="5">
    <source>
    </source>
</evidence>
<evidence type="ECO:0000305" key="6"/>
<feature type="chain" id="PRO_0000294094" description="Cyclin-dependent kinases regulatory subunit 1">
    <location>
        <begin position="1"/>
        <end position="87"/>
    </location>
</feature>
<feature type="mutagenesis site" description="Loss of function and impaired interaction with CDKA-1 or CDKB1-1." evidence="2">
    <original>E</original>
    <variation>Q</variation>
    <location>
        <position position="61"/>
    </location>
</feature>
<organism>
    <name type="scientific">Arabidopsis thaliana</name>
    <name type="common">Mouse-ear cress</name>
    <dbReference type="NCBI Taxonomy" id="3702"/>
    <lineage>
        <taxon>Eukaryota</taxon>
        <taxon>Viridiplantae</taxon>
        <taxon>Streptophyta</taxon>
        <taxon>Embryophyta</taxon>
        <taxon>Tracheophyta</taxon>
        <taxon>Spermatophyta</taxon>
        <taxon>Magnoliopsida</taxon>
        <taxon>eudicotyledons</taxon>
        <taxon>Gunneridae</taxon>
        <taxon>Pentapetalae</taxon>
        <taxon>rosids</taxon>
        <taxon>malvids</taxon>
        <taxon>Brassicales</taxon>
        <taxon>Brassicaceae</taxon>
        <taxon>Camelineae</taxon>
        <taxon>Arabidopsis</taxon>
    </lineage>
</organism>
<comment type="function">
    <text evidence="2">Associates with cyclin-dependent kinases (CDKs) and plays an essential role in the regulation of the cell cycle that affects plant growth rate. May inhibit both the G1/S and G2/M phases.</text>
</comment>
<comment type="subunit">
    <text evidence="1 2 3 4 5">Interacts with CDKA-1 (PubMed:10100639, PubMed:11319029, PubMed:20706207, PubMed:9276444). Interacts with CDKB1-1, CDKB1-2 and CDKB2-1 (PubMed:11319029, PubMed:11432958, PubMed:9276444). Interacts with CYCD2-1 and At4g14310 (PubMed:20706207).</text>
</comment>
<comment type="interaction">
    <interactant intactId="EBI-1253127">
        <id>O23249</id>
    </interactant>
    <interactant intactId="EBI-371713">
        <id>P24100</id>
        <label>CDKA-1</label>
    </interactant>
    <organismsDiffer>false</organismsDiffer>
    <experiments>9</experiments>
</comment>
<comment type="interaction">
    <interactant intactId="EBI-1253127">
        <id>O23249</id>
    </interactant>
    <interactant intactId="EBI-1253311">
        <id>P25859</id>
        <label>CDKB1-1</label>
    </interactant>
    <organismsDiffer>false</organismsDiffer>
    <experiments>7</experiments>
</comment>
<comment type="interaction">
    <interactant intactId="EBI-1253127">
        <id>O23249</id>
    </interactant>
    <interactant intactId="EBI-1253579">
        <id>Q8LF80</id>
        <label>CDKB2-1</label>
    </interactant>
    <organismsDiffer>false</organismsDiffer>
    <experiments>5</experiments>
</comment>
<comment type="miscellaneous">
    <text>Plants overexpressing CKS1 show reduced leaf size and root growth rates resulting from an increase of the cell-cycle duration with an equal extension of both G1 and G2 phases and a shortening of the meristem.</text>
</comment>
<comment type="similarity">
    <text evidence="6">Belongs to the CKS family.</text>
</comment>